<keyword id="KW-0002">3D-structure</keyword>
<keyword id="KW-0106">Calcium</keyword>
<keyword id="KW-0119">Carbohydrate metabolism</keyword>
<keyword id="KW-0868">Chloride</keyword>
<keyword id="KW-1015">Disulfide bond</keyword>
<keyword id="KW-0325">Glycoprotein</keyword>
<keyword id="KW-0326">Glycosidase</keyword>
<keyword id="KW-0378">Hydrolase</keyword>
<keyword id="KW-0479">Metal-binding</keyword>
<keyword id="KW-0873">Pyrrolidone carboxylic acid</keyword>
<keyword id="KW-1185">Reference proteome</keyword>
<keyword id="KW-0964">Secreted</keyword>
<keyword id="KW-0732">Signal</keyword>
<name>AMY1A_HUMAN</name>
<comment type="function">
    <text evidence="4">Calcium-binding enzyme that initiates starch digestion in the oral cavity (PubMed:12527308). Catalyzes the hydrolysis of internal (1-&gt;4)-alpha-D-glucosidic bonds, yielding a mixture of maltose, isomaltose, small amounts of glucose as well as small linear and branched oligosaccharides called dextrins (PubMed:12527308).</text>
</comment>
<comment type="catalytic activity">
    <reaction evidence="4">
        <text>Endohydrolysis of (1-&gt;4)-alpha-D-glucosidic linkages in polysaccharides containing three or more (1-&gt;4)-alpha-linked D-glucose units.</text>
        <dbReference type="EC" id="3.2.1.1"/>
    </reaction>
</comment>
<comment type="cofactor">
    <cofactor evidence="4 5">
        <name>Ca(2+)</name>
        <dbReference type="ChEBI" id="CHEBI:29108"/>
    </cofactor>
    <text evidence="4 5">Binds 1 Ca(2+) ion per subunit.</text>
</comment>
<comment type="cofactor">
    <cofactor evidence="4 5">
        <name>chloride</name>
        <dbReference type="ChEBI" id="CHEBI:17996"/>
    </cofactor>
    <text evidence="4 5">Binds 1 Cl(-) ion per subunit.</text>
</comment>
<comment type="subunit">
    <text>Monomer.</text>
</comment>
<comment type="subcellular location">
    <subcellularLocation>
        <location evidence="8">Secreted</location>
    </subcellularLocation>
</comment>
<comment type="similarity">
    <text evidence="8">Belongs to the glycosyl hydrolase 13 family.</text>
</comment>
<comment type="caution">
    <text evidence="8">Three distinct genes (AMY1A, AMY1B and AMY1C), located in a gene cluster on 1p21, encode proteins sharing the same peptidic sequence.</text>
</comment>
<comment type="online information" name="Wikipedia">
    <link uri="https://en.wikipedia.org/wiki/Amylase"/>
    <text>Amylase entry</text>
</comment>
<dbReference type="EC" id="3.2.1.1" evidence="4"/>
<dbReference type="EMBL" id="M18786">
    <property type="protein sequence ID" value="AAA52279.1"/>
    <property type="molecule type" value="Genomic_DNA"/>
</dbReference>
<dbReference type="EMBL" id="M18715">
    <property type="protein sequence ID" value="AAA52279.1"/>
    <property type="status" value="JOINED"/>
    <property type="molecule type" value="Genomic_DNA"/>
</dbReference>
<dbReference type="EMBL" id="M18717">
    <property type="protein sequence ID" value="AAA52279.1"/>
    <property type="status" value="JOINED"/>
    <property type="molecule type" value="Genomic_DNA"/>
</dbReference>
<dbReference type="EMBL" id="M18719">
    <property type="protein sequence ID" value="AAA52279.1"/>
    <property type="status" value="JOINED"/>
    <property type="molecule type" value="Genomic_DNA"/>
</dbReference>
<dbReference type="EMBL" id="M18721">
    <property type="protein sequence ID" value="AAA52279.1"/>
    <property type="status" value="JOINED"/>
    <property type="molecule type" value="Genomic_DNA"/>
</dbReference>
<dbReference type="EMBL" id="M18723">
    <property type="protein sequence ID" value="AAA52279.1"/>
    <property type="status" value="JOINED"/>
    <property type="molecule type" value="Genomic_DNA"/>
</dbReference>
<dbReference type="EMBL" id="M18725">
    <property type="protein sequence ID" value="AAA52279.1"/>
    <property type="status" value="JOINED"/>
    <property type="molecule type" value="Genomic_DNA"/>
</dbReference>
<dbReference type="EMBL" id="M18727">
    <property type="protein sequence ID" value="AAA52279.1"/>
    <property type="status" value="JOINED"/>
    <property type="molecule type" value="Genomic_DNA"/>
</dbReference>
<dbReference type="EMBL" id="M18784">
    <property type="protein sequence ID" value="AAA52279.1"/>
    <property type="status" value="JOINED"/>
    <property type="molecule type" value="Genomic_DNA"/>
</dbReference>
<dbReference type="EMBL" id="AK292341">
    <property type="protein sequence ID" value="BAF85030.1"/>
    <property type="molecule type" value="mRNA"/>
</dbReference>
<dbReference type="EMBL" id="AC105272">
    <property type="status" value="NOT_ANNOTATED_CDS"/>
    <property type="molecule type" value="Genomic_DNA"/>
</dbReference>
<dbReference type="EMBL" id="BC063129">
    <property type="protein sequence ID" value="AAH63129.1"/>
    <property type="molecule type" value="mRNA"/>
</dbReference>
<dbReference type="EMBL" id="BC069347">
    <property type="protein sequence ID" value="AAH69347.1"/>
    <property type="molecule type" value="mRNA"/>
</dbReference>
<dbReference type="EMBL" id="BC069463">
    <property type="protein sequence ID" value="AAH69463.1"/>
    <property type="molecule type" value="mRNA"/>
</dbReference>
<dbReference type="EMBL" id="BC092444">
    <property type="protein sequence ID" value="AAH92444.1"/>
    <property type="molecule type" value="mRNA"/>
</dbReference>
<dbReference type="EMBL" id="BC132985">
    <property type="protein sequence ID" value="AAI32986.1"/>
    <property type="molecule type" value="mRNA"/>
</dbReference>
<dbReference type="EMBL" id="BC132987">
    <property type="protein sequence ID" value="AAI32988.1"/>
    <property type="molecule type" value="mRNA"/>
</dbReference>
<dbReference type="EMBL" id="BC132995">
    <property type="protein sequence ID" value="AAI32996.1"/>
    <property type="molecule type" value="mRNA"/>
</dbReference>
<dbReference type="EMBL" id="BC132997">
    <property type="protein sequence ID" value="AAI32998.1"/>
    <property type="molecule type" value="mRNA"/>
</dbReference>
<dbReference type="EMBL" id="M18671">
    <property type="protein sequence ID" value="AAA58368.1"/>
    <property type="molecule type" value="Genomic_DNA"/>
</dbReference>
<dbReference type="EMBL" id="M18674">
    <property type="protein sequence ID" value="AAA16183.2"/>
    <property type="molecule type" value="Genomic_DNA"/>
</dbReference>
<dbReference type="EMBL" id="M19233">
    <property type="protein sequence ID" value="AAA57345.1"/>
    <property type="status" value="ALT_TERM"/>
    <property type="molecule type" value="Genomic_DNA"/>
</dbReference>
<dbReference type="EMBL" id="M17883">
    <property type="protein sequence ID" value="AAA57345.1"/>
    <property type="status" value="JOINED"/>
    <property type="molecule type" value="Genomic_DNA"/>
</dbReference>
<dbReference type="EMBL" id="M17884">
    <property type="status" value="NOT_ANNOTATED_CDS"/>
    <property type="molecule type" value="Genomic_DNA"/>
</dbReference>
<dbReference type="CCDS" id="CCDS30782.1"/>
<dbReference type="PIR" id="A91543">
    <property type="entry name" value="ALHUS"/>
</dbReference>
<dbReference type="RefSeq" id="NP_001008219.1">
    <property type="nucleotide sequence ID" value="NM_001008218.1"/>
</dbReference>
<dbReference type="RefSeq" id="NP_001008220.1">
    <property type="nucleotide sequence ID" value="NM_001008219.2"/>
</dbReference>
<dbReference type="RefSeq" id="NP_001008222.1">
    <property type="nucleotide sequence ID" value="NM_001008221.1"/>
</dbReference>
<dbReference type="RefSeq" id="NP_001333709.1">
    <property type="nucleotide sequence ID" value="NM_001346780.1"/>
</dbReference>
<dbReference type="RefSeq" id="NP_004029.2">
    <property type="nucleotide sequence ID" value="NM_004038.3"/>
</dbReference>
<dbReference type="RefSeq" id="XP_011539564.1">
    <property type="nucleotide sequence ID" value="XM_011541262.1"/>
</dbReference>
<dbReference type="RefSeq" id="XP_016856547.1">
    <property type="nucleotide sequence ID" value="XM_017001058.1"/>
</dbReference>
<dbReference type="PDB" id="1C8Q">
    <property type="method" value="X-ray"/>
    <property type="resolution" value="2.30 A"/>
    <property type="chains" value="A=16-511"/>
</dbReference>
<dbReference type="PDB" id="1JXJ">
    <property type="method" value="X-ray"/>
    <property type="resolution" value="1.99 A"/>
    <property type="chains" value="A=16-511"/>
</dbReference>
<dbReference type="PDB" id="1JXK">
    <property type="method" value="X-ray"/>
    <property type="resolution" value="1.90 A"/>
    <property type="chains" value="A=16-511"/>
</dbReference>
<dbReference type="PDB" id="1MFU">
    <property type="method" value="X-ray"/>
    <property type="resolution" value="2.00 A"/>
    <property type="chains" value="A=17-511"/>
</dbReference>
<dbReference type="PDB" id="1MFV">
    <property type="method" value="X-ray"/>
    <property type="resolution" value="2.00 A"/>
    <property type="chains" value="A=17-511"/>
</dbReference>
<dbReference type="PDB" id="1NM9">
    <property type="method" value="X-ray"/>
    <property type="resolution" value="2.10 A"/>
    <property type="chains" value="A=16-511"/>
</dbReference>
<dbReference type="PDB" id="1Q4N">
    <property type="method" value="X-ray"/>
    <property type="resolution" value="2.07 A"/>
    <property type="chains" value="X=16-511"/>
</dbReference>
<dbReference type="PDB" id="1SMD">
    <property type="method" value="X-ray"/>
    <property type="resolution" value="1.60 A"/>
    <property type="chains" value="A=17-511"/>
</dbReference>
<dbReference type="PDB" id="1XV8">
    <property type="method" value="X-ray"/>
    <property type="resolution" value="3.00 A"/>
    <property type="chains" value="A/B=16-511"/>
</dbReference>
<dbReference type="PDB" id="1Z32">
    <property type="method" value="X-ray"/>
    <property type="resolution" value="1.60 A"/>
    <property type="chains" value="X=16-511"/>
</dbReference>
<dbReference type="PDB" id="3BLK">
    <property type="method" value="X-ray"/>
    <property type="resolution" value="2.00 A"/>
    <property type="chains" value="A=16-511"/>
</dbReference>
<dbReference type="PDB" id="3BLP">
    <property type="method" value="X-ray"/>
    <property type="resolution" value="1.60 A"/>
    <property type="chains" value="X=16-511"/>
</dbReference>
<dbReference type="PDB" id="3DHP">
    <property type="method" value="X-ray"/>
    <property type="resolution" value="1.50 A"/>
    <property type="chains" value="A=16-511"/>
</dbReference>
<dbReference type="PDBsum" id="1C8Q"/>
<dbReference type="PDBsum" id="1JXJ"/>
<dbReference type="PDBsum" id="1JXK"/>
<dbReference type="PDBsum" id="1MFU"/>
<dbReference type="PDBsum" id="1MFV"/>
<dbReference type="PDBsum" id="1NM9"/>
<dbReference type="PDBsum" id="1Q4N"/>
<dbReference type="PDBsum" id="1SMD"/>
<dbReference type="PDBsum" id="1XV8"/>
<dbReference type="PDBsum" id="1Z32"/>
<dbReference type="PDBsum" id="3BLK"/>
<dbReference type="PDBsum" id="3BLP"/>
<dbReference type="PDBsum" id="3DHP"/>
<dbReference type="SMR" id="P0DUB6"/>
<dbReference type="FunCoup" id="P0DUB6">
    <property type="interactions" value="128"/>
</dbReference>
<dbReference type="BindingDB" id="P0DUB6"/>
<dbReference type="ChEMBL" id="CHEMBL2478"/>
<dbReference type="DrugCentral" id="P0DUB6"/>
<dbReference type="GlyCosmos" id="P0DUB6">
    <property type="glycosylation" value="2 sites, No reported glycans"/>
</dbReference>
<dbReference type="GlyGen" id="P0DUB6">
    <property type="glycosylation" value="2 sites"/>
</dbReference>
<dbReference type="iPTMnet" id="P0DUB6"/>
<dbReference type="PhosphoSitePlus" id="P0DUB6"/>
<dbReference type="jPOST" id="P0DUB6"/>
<dbReference type="MassIVE" id="P0DUB6"/>
<dbReference type="Ensembl" id="ENST00000370083.9">
    <property type="protein sequence ID" value="ENSP00000359100.4"/>
    <property type="gene ID" value="ENSG00000237763.10"/>
</dbReference>
<dbReference type="GeneID" id="276"/>
<dbReference type="GeneID" id="277"/>
<dbReference type="GeneID" id="278"/>
<dbReference type="KEGG" id="hsa:276"/>
<dbReference type="KEGG" id="hsa:277"/>
<dbReference type="KEGG" id="hsa:278"/>
<dbReference type="MANE-Select" id="ENST00000370083.9">
    <property type="protein sequence ID" value="ENSP00000359100.4"/>
    <property type="RefSeq nucleotide sequence ID" value="NM_004038.4"/>
    <property type="RefSeq protein sequence ID" value="NP_004029.2"/>
</dbReference>
<dbReference type="AGR" id="HGNC:474"/>
<dbReference type="AGR" id="HGNC:475"/>
<dbReference type="AGR" id="HGNC:476"/>
<dbReference type="CTD" id="276"/>
<dbReference type="CTD" id="277"/>
<dbReference type="CTD" id="278"/>
<dbReference type="DisGeNET" id="276"/>
<dbReference type="DisGeNET" id="277"/>
<dbReference type="DisGeNET" id="278"/>
<dbReference type="GeneCards" id="AMY1A"/>
<dbReference type="HGNC" id="HGNC:474">
    <property type="gene designation" value="AMY1A"/>
</dbReference>
<dbReference type="HPA" id="ENSG00000237763">
    <property type="expression patterns" value="Tissue enriched (salivary)"/>
</dbReference>
<dbReference type="MIM" id="104702">
    <property type="type" value="gene"/>
</dbReference>
<dbReference type="neXtProt" id="NX_P0DUB6"/>
<dbReference type="OpenTargets" id="ENSG00000187733"/>
<dbReference type="GeneTree" id="ENSGT00940000154802"/>
<dbReference type="InParanoid" id="P0DUB6"/>
<dbReference type="OMA" id="GTHGVQS"/>
<dbReference type="OrthoDB" id="550577at2759"/>
<dbReference type="Reactome" id="R-HSA-189085">
    <property type="pathway name" value="Digestion of dietary carbohydrate"/>
</dbReference>
<dbReference type="EvolutionaryTrace" id="P0DUB6"/>
<dbReference type="PRO" id="PR:P0DUB6"/>
<dbReference type="Proteomes" id="UP000005640">
    <property type="component" value="Chromosome 1"/>
</dbReference>
<dbReference type="Bgee" id="ENSG00000237763">
    <property type="expression patterns" value="Expressed in body of pancreas and 88 other cell types or tissues"/>
</dbReference>
<dbReference type="ExpressionAtlas" id="P0DUB6">
    <property type="expression patterns" value="baseline and differential"/>
</dbReference>
<dbReference type="GO" id="GO:0070062">
    <property type="term" value="C:extracellular exosome"/>
    <property type="evidence" value="ECO:0007005"/>
    <property type="project" value="UniProtKB"/>
</dbReference>
<dbReference type="GO" id="GO:0005615">
    <property type="term" value="C:extracellular space"/>
    <property type="evidence" value="ECO:0000314"/>
    <property type="project" value="UniProtKB"/>
</dbReference>
<dbReference type="GO" id="GO:0004556">
    <property type="term" value="F:alpha-amylase activity"/>
    <property type="evidence" value="ECO:0000314"/>
    <property type="project" value="UniProtKB"/>
</dbReference>
<dbReference type="GO" id="GO:0005509">
    <property type="term" value="F:calcium ion binding"/>
    <property type="evidence" value="ECO:0000314"/>
    <property type="project" value="UniProtKB"/>
</dbReference>
<dbReference type="GO" id="GO:0031404">
    <property type="term" value="F:chloride ion binding"/>
    <property type="evidence" value="ECO:0000314"/>
    <property type="project" value="UniProtKB"/>
</dbReference>
<dbReference type="GO" id="GO:0005975">
    <property type="term" value="P:carbohydrate metabolic process"/>
    <property type="evidence" value="ECO:0000318"/>
    <property type="project" value="GO_Central"/>
</dbReference>
<dbReference type="GO" id="GO:0009311">
    <property type="term" value="P:oligosaccharide metabolic process"/>
    <property type="evidence" value="ECO:0000314"/>
    <property type="project" value="UniProtKB"/>
</dbReference>
<dbReference type="CDD" id="cd11317">
    <property type="entry name" value="AmyAc_bac_euk_AmyA"/>
    <property type="match status" value="1"/>
</dbReference>
<dbReference type="FunFam" id="2.60.40.1180:FF:000020">
    <property type="entry name" value="Pancreatic alpha-amylase"/>
    <property type="match status" value="1"/>
</dbReference>
<dbReference type="FunFam" id="3.20.20.80:FF:000056">
    <property type="entry name" value="Pancreatic alpha-amylase"/>
    <property type="match status" value="1"/>
</dbReference>
<dbReference type="Gene3D" id="3.20.20.80">
    <property type="entry name" value="Glycosidases"/>
    <property type="match status" value="1"/>
</dbReference>
<dbReference type="Gene3D" id="2.60.40.1180">
    <property type="entry name" value="Golgi alpha-mannosidase II"/>
    <property type="match status" value="1"/>
</dbReference>
<dbReference type="InterPro" id="IPR006048">
    <property type="entry name" value="A-amylase/branching_C"/>
</dbReference>
<dbReference type="InterPro" id="IPR031319">
    <property type="entry name" value="A-amylase_C"/>
</dbReference>
<dbReference type="InterPro" id="IPR006046">
    <property type="entry name" value="Alpha_amylase"/>
</dbReference>
<dbReference type="InterPro" id="IPR006047">
    <property type="entry name" value="Glyco_hydro_13_cat_dom"/>
</dbReference>
<dbReference type="InterPro" id="IPR013780">
    <property type="entry name" value="Glyco_hydro_b"/>
</dbReference>
<dbReference type="InterPro" id="IPR017853">
    <property type="entry name" value="Glycoside_hydrolase_SF"/>
</dbReference>
<dbReference type="PANTHER" id="PTHR43447">
    <property type="entry name" value="ALPHA-AMYLASE"/>
    <property type="match status" value="1"/>
</dbReference>
<dbReference type="Pfam" id="PF00128">
    <property type="entry name" value="Alpha-amylase"/>
    <property type="match status" value="1"/>
</dbReference>
<dbReference type="Pfam" id="PF02806">
    <property type="entry name" value="Alpha-amylase_C"/>
    <property type="match status" value="1"/>
</dbReference>
<dbReference type="PRINTS" id="PR00110">
    <property type="entry name" value="ALPHAAMYLASE"/>
</dbReference>
<dbReference type="SMART" id="SM00642">
    <property type="entry name" value="Aamy"/>
    <property type="match status" value="1"/>
</dbReference>
<dbReference type="SMART" id="SM00632">
    <property type="entry name" value="Aamy_C"/>
    <property type="match status" value="1"/>
</dbReference>
<dbReference type="SUPFAM" id="SSF51445">
    <property type="entry name" value="(Trans)glycosidases"/>
    <property type="match status" value="1"/>
</dbReference>
<dbReference type="SUPFAM" id="SSF51011">
    <property type="entry name" value="Glycosyl hydrolase domain"/>
    <property type="match status" value="1"/>
</dbReference>
<organism>
    <name type="scientific">Homo sapiens</name>
    <name type="common">Human</name>
    <dbReference type="NCBI Taxonomy" id="9606"/>
    <lineage>
        <taxon>Eukaryota</taxon>
        <taxon>Metazoa</taxon>
        <taxon>Chordata</taxon>
        <taxon>Craniata</taxon>
        <taxon>Vertebrata</taxon>
        <taxon>Euteleostomi</taxon>
        <taxon>Mammalia</taxon>
        <taxon>Eutheria</taxon>
        <taxon>Euarchontoglires</taxon>
        <taxon>Primates</taxon>
        <taxon>Haplorrhini</taxon>
        <taxon>Catarrhini</taxon>
        <taxon>Hominidae</taxon>
        <taxon>Homo</taxon>
    </lineage>
</organism>
<reference key="1">
    <citation type="journal article" date="1986" name="Gene">
        <title>Primary structure of human salivary alpha-amylase gene.</title>
        <authorList>
            <person name="Nishide T."/>
            <person name="Nakamura Y."/>
            <person name="Emi M."/>
            <person name="Yamamoto T."/>
            <person name="Ogawa M."/>
            <person name="Mori T."/>
            <person name="Matsubara K."/>
        </authorList>
    </citation>
    <scope>NUCLEOTIDE SEQUENCE [GENOMIC DNA]</scope>
</reference>
<reference key="2">
    <citation type="journal article" date="1984" name="Gene">
        <title>Corrected sequences of cDNAs for human salivary and pancreatic alpha-amylases.</title>
        <authorList>
            <person name="Nakamura Y."/>
            <person name="Ogawa M."/>
            <person name="Nishide T."/>
            <person name="Emi M."/>
            <person name="Kosaki G."/>
            <person name="Himeno S."/>
            <person name="Matsubara K."/>
        </authorList>
    </citation>
    <scope>NUCLEOTIDE SEQUENCE [GENOMIC DNA]</scope>
</reference>
<reference key="3">
    <citation type="journal article" date="1986" name="Gene">
        <authorList>
            <person name="Nakamura Y."/>
            <person name="Ogawa M."/>
            <person name="Nishide T."/>
            <person name="Emi M."/>
            <person name="Kosaki G."/>
            <person name="Himeno S."/>
            <person name="Matsubara K."/>
        </authorList>
    </citation>
    <scope>ERRATUM OF PUBMED:6610603</scope>
    <scope>SEQUENCE REVISION</scope>
</reference>
<reference key="4">
    <citation type="journal article" date="2004" name="Nat. Genet.">
        <title>Complete sequencing and characterization of 21,243 full-length human cDNAs.</title>
        <authorList>
            <person name="Ota T."/>
            <person name="Suzuki Y."/>
            <person name="Nishikawa T."/>
            <person name="Otsuki T."/>
            <person name="Sugiyama T."/>
            <person name="Irie R."/>
            <person name="Wakamatsu A."/>
            <person name="Hayashi K."/>
            <person name="Sato H."/>
            <person name="Nagai K."/>
            <person name="Kimura K."/>
            <person name="Makita H."/>
            <person name="Sekine M."/>
            <person name="Obayashi M."/>
            <person name="Nishi T."/>
            <person name="Shibahara T."/>
            <person name="Tanaka T."/>
            <person name="Ishii S."/>
            <person name="Yamamoto J."/>
            <person name="Saito K."/>
            <person name="Kawai Y."/>
            <person name="Isono Y."/>
            <person name="Nakamura Y."/>
            <person name="Nagahari K."/>
            <person name="Murakami K."/>
            <person name="Yasuda T."/>
            <person name="Iwayanagi T."/>
            <person name="Wagatsuma M."/>
            <person name="Shiratori A."/>
            <person name="Sudo H."/>
            <person name="Hosoiri T."/>
            <person name="Kaku Y."/>
            <person name="Kodaira H."/>
            <person name="Kondo H."/>
            <person name="Sugawara M."/>
            <person name="Takahashi M."/>
            <person name="Kanda K."/>
            <person name="Yokoi T."/>
            <person name="Furuya T."/>
            <person name="Kikkawa E."/>
            <person name="Omura Y."/>
            <person name="Abe K."/>
            <person name="Kamihara K."/>
            <person name="Katsuta N."/>
            <person name="Sato K."/>
            <person name="Tanikawa M."/>
            <person name="Yamazaki M."/>
            <person name="Ninomiya K."/>
            <person name="Ishibashi T."/>
            <person name="Yamashita H."/>
            <person name="Murakawa K."/>
            <person name="Fujimori K."/>
            <person name="Tanai H."/>
            <person name="Kimata M."/>
            <person name="Watanabe M."/>
            <person name="Hiraoka S."/>
            <person name="Chiba Y."/>
            <person name="Ishida S."/>
            <person name="Ono Y."/>
            <person name="Takiguchi S."/>
            <person name="Watanabe S."/>
            <person name="Yosida M."/>
            <person name="Hotuta T."/>
            <person name="Kusano J."/>
            <person name="Kanehori K."/>
            <person name="Takahashi-Fujii A."/>
            <person name="Hara H."/>
            <person name="Tanase T.-O."/>
            <person name="Nomura Y."/>
            <person name="Togiya S."/>
            <person name="Komai F."/>
            <person name="Hara R."/>
            <person name="Takeuchi K."/>
            <person name="Arita M."/>
            <person name="Imose N."/>
            <person name="Musashino K."/>
            <person name="Yuuki H."/>
            <person name="Oshima A."/>
            <person name="Sasaki N."/>
            <person name="Aotsuka S."/>
            <person name="Yoshikawa Y."/>
            <person name="Matsunawa H."/>
            <person name="Ichihara T."/>
            <person name="Shiohata N."/>
            <person name="Sano S."/>
            <person name="Moriya S."/>
            <person name="Momiyama H."/>
            <person name="Satoh N."/>
            <person name="Takami S."/>
            <person name="Terashima Y."/>
            <person name="Suzuki O."/>
            <person name="Nakagawa S."/>
            <person name="Senoh A."/>
            <person name="Mizoguchi H."/>
            <person name="Goto Y."/>
            <person name="Shimizu F."/>
            <person name="Wakebe H."/>
            <person name="Hishigaki H."/>
            <person name="Watanabe T."/>
            <person name="Sugiyama A."/>
            <person name="Takemoto M."/>
            <person name="Kawakami B."/>
            <person name="Yamazaki M."/>
            <person name="Watanabe K."/>
            <person name="Kumagai A."/>
            <person name="Itakura S."/>
            <person name="Fukuzumi Y."/>
            <person name="Fujimori Y."/>
            <person name="Komiyama M."/>
            <person name="Tashiro H."/>
            <person name="Tanigami A."/>
            <person name="Fujiwara T."/>
            <person name="Ono T."/>
            <person name="Yamada K."/>
            <person name="Fujii Y."/>
            <person name="Ozaki K."/>
            <person name="Hirao M."/>
            <person name="Ohmori Y."/>
            <person name="Kawabata A."/>
            <person name="Hikiji T."/>
            <person name="Kobatake N."/>
            <person name="Inagaki H."/>
            <person name="Ikema Y."/>
            <person name="Okamoto S."/>
            <person name="Okitani R."/>
            <person name="Kawakami T."/>
            <person name="Noguchi S."/>
            <person name="Itoh T."/>
            <person name="Shigeta K."/>
            <person name="Senba T."/>
            <person name="Matsumura K."/>
            <person name="Nakajima Y."/>
            <person name="Mizuno T."/>
            <person name="Morinaga M."/>
            <person name="Sasaki M."/>
            <person name="Togashi T."/>
            <person name="Oyama M."/>
            <person name="Hata H."/>
            <person name="Watanabe M."/>
            <person name="Komatsu T."/>
            <person name="Mizushima-Sugano J."/>
            <person name="Satoh T."/>
            <person name="Shirai Y."/>
            <person name="Takahashi Y."/>
            <person name="Nakagawa K."/>
            <person name="Okumura K."/>
            <person name="Nagase T."/>
            <person name="Nomura N."/>
            <person name="Kikuchi H."/>
            <person name="Masuho Y."/>
            <person name="Yamashita R."/>
            <person name="Nakai K."/>
            <person name="Yada T."/>
            <person name="Nakamura Y."/>
            <person name="Ohara O."/>
            <person name="Isogai T."/>
            <person name="Sugano S."/>
        </authorList>
    </citation>
    <scope>NUCLEOTIDE SEQUENCE [LARGE SCALE MRNA]</scope>
</reference>
<reference key="5">
    <citation type="journal article" date="2006" name="Nature">
        <title>The DNA sequence and biological annotation of human chromosome 1.</title>
        <authorList>
            <person name="Gregory S.G."/>
            <person name="Barlow K.F."/>
            <person name="McLay K.E."/>
            <person name="Kaul R."/>
            <person name="Swarbreck D."/>
            <person name="Dunham A."/>
            <person name="Scott C.E."/>
            <person name="Howe K.L."/>
            <person name="Woodfine K."/>
            <person name="Spencer C.C.A."/>
            <person name="Jones M.C."/>
            <person name="Gillson C."/>
            <person name="Searle S."/>
            <person name="Zhou Y."/>
            <person name="Kokocinski F."/>
            <person name="McDonald L."/>
            <person name="Evans R."/>
            <person name="Phillips K."/>
            <person name="Atkinson A."/>
            <person name="Cooper R."/>
            <person name="Jones C."/>
            <person name="Hall R.E."/>
            <person name="Andrews T.D."/>
            <person name="Lloyd C."/>
            <person name="Ainscough R."/>
            <person name="Almeida J.P."/>
            <person name="Ambrose K.D."/>
            <person name="Anderson F."/>
            <person name="Andrew R.W."/>
            <person name="Ashwell R.I.S."/>
            <person name="Aubin K."/>
            <person name="Babbage A.K."/>
            <person name="Bagguley C.L."/>
            <person name="Bailey J."/>
            <person name="Beasley H."/>
            <person name="Bethel G."/>
            <person name="Bird C.P."/>
            <person name="Bray-Allen S."/>
            <person name="Brown J.Y."/>
            <person name="Brown A.J."/>
            <person name="Buckley D."/>
            <person name="Burton J."/>
            <person name="Bye J."/>
            <person name="Carder C."/>
            <person name="Chapman J.C."/>
            <person name="Clark S.Y."/>
            <person name="Clarke G."/>
            <person name="Clee C."/>
            <person name="Cobley V."/>
            <person name="Collier R.E."/>
            <person name="Corby N."/>
            <person name="Coville G.J."/>
            <person name="Davies J."/>
            <person name="Deadman R."/>
            <person name="Dunn M."/>
            <person name="Earthrowl M."/>
            <person name="Ellington A.G."/>
            <person name="Errington H."/>
            <person name="Frankish A."/>
            <person name="Frankland J."/>
            <person name="French L."/>
            <person name="Garner P."/>
            <person name="Garnett J."/>
            <person name="Gay L."/>
            <person name="Ghori M.R.J."/>
            <person name="Gibson R."/>
            <person name="Gilby L.M."/>
            <person name="Gillett W."/>
            <person name="Glithero R.J."/>
            <person name="Grafham D.V."/>
            <person name="Griffiths C."/>
            <person name="Griffiths-Jones S."/>
            <person name="Grocock R."/>
            <person name="Hammond S."/>
            <person name="Harrison E.S.I."/>
            <person name="Hart E."/>
            <person name="Haugen E."/>
            <person name="Heath P.D."/>
            <person name="Holmes S."/>
            <person name="Holt K."/>
            <person name="Howden P.J."/>
            <person name="Hunt A.R."/>
            <person name="Hunt S.E."/>
            <person name="Hunter G."/>
            <person name="Isherwood J."/>
            <person name="James R."/>
            <person name="Johnson C."/>
            <person name="Johnson D."/>
            <person name="Joy A."/>
            <person name="Kay M."/>
            <person name="Kershaw J.K."/>
            <person name="Kibukawa M."/>
            <person name="Kimberley A.M."/>
            <person name="King A."/>
            <person name="Knights A.J."/>
            <person name="Lad H."/>
            <person name="Laird G."/>
            <person name="Lawlor S."/>
            <person name="Leongamornlert D.A."/>
            <person name="Lloyd D.M."/>
            <person name="Loveland J."/>
            <person name="Lovell J."/>
            <person name="Lush M.J."/>
            <person name="Lyne R."/>
            <person name="Martin S."/>
            <person name="Mashreghi-Mohammadi M."/>
            <person name="Matthews L."/>
            <person name="Matthews N.S.W."/>
            <person name="McLaren S."/>
            <person name="Milne S."/>
            <person name="Mistry S."/>
            <person name="Moore M.J.F."/>
            <person name="Nickerson T."/>
            <person name="O'Dell C.N."/>
            <person name="Oliver K."/>
            <person name="Palmeiri A."/>
            <person name="Palmer S.A."/>
            <person name="Parker A."/>
            <person name="Patel D."/>
            <person name="Pearce A.V."/>
            <person name="Peck A.I."/>
            <person name="Pelan S."/>
            <person name="Phelps K."/>
            <person name="Phillimore B.J."/>
            <person name="Plumb R."/>
            <person name="Rajan J."/>
            <person name="Raymond C."/>
            <person name="Rouse G."/>
            <person name="Saenphimmachak C."/>
            <person name="Sehra H.K."/>
            <person name="Sheridan E."/>
            <person name="Shownkeen R."/>
            <person name="Sims S."/>
            <person name="Skuce C.D."/>
            <person name="Smith M."/>
            <person name="Steward C."/>
            <person name="Subramanian S."/>
            <person name="Sycamore N."/>
            <person name="Tracey A."/>
            <person name="Tromans A."/>
            <person name="Van Helmond Z."/>
            <person name="Wall M."/>
            <person name="Wallis J.M."/>
            <person name="White S."/>
            <person name="Whitehead S.L."/>
            <person name="Wilkinson J.E."/>
            <person name="Willey D.L."/>
            <person name="Williams H."/>
            <person name="Wilming L."/>
            <person name="Wray P.W."/>
            <person name="Wu Z."/>
            <person name="Coulson A."/>
            <person name="Vaudin M."/>
            <person name="Sulston J.E."/>
            <person name="Durbin R.M."/>
            <person name="Hubbard T."/>
            <person name="Wooster R."/>
            <person name="Dunham I."/>
            <person name="Carter N.P."/>
            <person name="McVean G."/>
            <person name="Ross M.T."/>
            <person name="Harrow J."/>
            <person name="Olson M.V."/>
            <person name="Beck S."/>
            <person name="Rogers J."/>
            <person name="Bentley D.R."/>
        </authorList>
    </citation>
    <scope>NUCLEOTIDE SEQUENCE [LARGE SCALE GENOMIC DNA]</scope>
</reference>
<reference key="6">
    <citation type="journal article" date="2004" name="Genome Res.">
        <title>The status, quality, and expansion of the NIH full-length cDNA project: the Mammalian Gene Collection (MGC).</title>
        <authorList>
            <consortium name="The MGC Project Team"/>
        </authorList>
    </citation>
    <scope>NUCLEOTIDE SEQUENCE [LARGE SCALE MRNA]</scope>
    <source>
        <tissue>Thyroid</tissue>
    </source>
</reference>
<reference key="7">
    <citation type="journal article" date="1988" name="Mol. Cell. Biol.">
        <title>Concerted evolution of human amylase genes.</title>
        <authorList>
            <person name="Gumucio D.L."/>
            <person name="Wiebauer K."/>
            <person name="Caldwell R.M."/>
            <person name="Samuelson L.C."/>
            <person name="Meisler M.H."/>
        </authorList>
    </citation>
    <scope>NUCLEOTIDE SEQUENCE [GENOMIC DNA] OF 1-56 AND 408-448</scope>
</reference>
<reference key="8">
    <citation type="journal article" date="1987" name="Mol. Biol. Med.">
        <title>Identification of a human salivary amylase gene. Partial sequence of genomic DNA suggests a mode of regulation different from that of mouse, Amy1.</title>
        <authorList>
            <person name="Handy D.E."/>
            <person name="Larsen S.H."/>
            <person name="Karn R.C."/>
            <person name="Hodes M.E."/>
        </authorList>
    </citation>
    <scope>NUCLEOTIDE SEQUENCE [GENOMIC DNA] OF 1-293 AND 450-511</scope>
</reference>
<reference key="9">
    <citation type="journal article" date="1991" name="Electrophoresis">
        <title>Electrophoretic characterization of posttranslational modifications of human parotid salivary alpha-amylase.</title>
        <authorList>
            <person name="Bank R.A."/>
            <person name="Hettema E.H."/>
            <person name="Arwert F."/>
            <person name="Amerongen A.V."/>
            <person name="Pronk J.C."/>
        </authorList>
    </citation>
    <scope>GLYCOSYLATION AT ASN-427</scope>
    <scope>DEAMIDATION AT ASN-365; ASN-427 AND ASN-474</scope>
</reference>
<reference key="10">
    <citation type="journal article" date="2006" name="J. Proteome Res.">
        <title>Identification of N-linked glycoproteins in human saliva by glycoprotein capture and mass spectrometry.</title>
        <authorList>
            <person name="Ramachandran P."/>
            <person name="Boontheung P."/>
            <person name="Xie Y."/>
            <person name="Sondej M."/>
            <person name="Wong D.T."/>
            <person name="Loo J.A."/>
        </authorList>
    </citation>
    <scope>GLYCOSYLATION [LARGE SCALE ANALYSIS] AT ASN-427</scope>
    <source>
        <tissue>Saliva</tissue>
    </source>
</reference>
<reference key="11">
    <citation type="journal article" date="1996" name="Acta Crystallogr. D">
        <title>Structure of human salivary alpha-amylase at 1.6-A resolution: implications for its role in the oral cavity.</title>
        <authorList>
            <person name="Ramasubbu N."/>
            <person name="Paloth V."/>
            <person name="Luo Y."/>
            <person name="Brayer G.D."/>
            <person name="Levine M.J."/>
        </authorList>
    </citation>
    <scope>X-RAY CRYSTALLOGRAPHY (1.60 ANGSTROMS) OF 17-511 IN COMPLEX WITH CALCIUM AND CHLORIDE</scope>
    <scope>DISULFIDE BONDS</scope>
    <scope>COFACTOR</scope>
</reference>
<reference key="12">
    <citation type="journal article" date="2003" name="J. Mol. Biol.">
        <title>Probing the role of a mobile loop in substrate binding and enzyme activity of human salivary amylase.</title>
        <authorList>
            <person name="Ramasubbu N."/>
            <person name="Ragunath C."/>
            <person name="Mishra P.J."/>
        </authorList>
    </citation>
    <scope>X-RAY CRYSTALLOGRAPHY (1.90 ANGSTROMS) OF 16-511 OF WILD-TYPE AND MUTANT 321-GLY--ALA-325 DEL IN COMPLEX WITH CALCIUM AND CHLORIDE</scope>
    <scope>CATALYTIC ACTIVITY</scope>
    <scope>DISULFIDE BONDS</scope>
    <scope>FUNCTION</scope>
    <scope>SUBCELLULAR LOCATION</scope>
</reference>
<feature type="signal peptide" evidence="3">
    <location>
        <begin position="1"/>
        <end position="15"/>
    </location>
</feature>
<feature type="chain" id="PRO_0000001401" description="Alpha-amylase 1A">
    <location>
        <begin position="16"/>
        <end position="511"/>
    </location>
</feature>
<feature type="active site" description="Nucleophile">
    <location>
        <position position="212"/>
    </location>
</feature>
<feature type="active site" description="Proton donor">
    <location>
        <position position="248"/>
    </location>
</feature>
<feature type="binding site" evidence="4 5 10">
    <location>
        <position position="115"/>
    </location>
    <ligand>
        <name>Ca(2+)</name>
        <dbReference type="ChEBI" id="CHEBI:29108"/>
    </ligand>
</feature>
<feature type="binding site" evidence="4 5 10">
    <location>
        <position position="173"/>
    </location>
    <ligand>
        <name>Ca(2+)</name>
        <dbReference type="ChEBI" id="CHEBI:29108"/>
    </ligand>
</feature>
<feature type="binding site" evidence="4 5 10">
    <location>
        <position position="182"/>
    </location>
    <ligand>
        <name>Ca(2+)</name>
        <dbReference type="ChEBI" id="CHEBI:29108"/>
    </ligand>
</feature>
<feature type="binding site" evidence="4 5 10">
    <location>
        <position position="210"/>
    </location>
    <ligand>
        <name>chloride</name>
        <dbReference type="ChEBI" id="CHEBI:17996"/>
    </ligand>
</feature>
<feature type="binding site" evidence="4 5 10">
    <location>
        <position position="216"/>
    </location>
    <ligand>
        <name>Ca(2+)</name>
        <dbReference type="ChEBI" id="CHEBI:29108"/>
    </ligand>
</feature>
<feature type="binding site" evidence="4 5 10">
    <location>
        <position position="313"/>
    </location>
    <ligand>
        <name>chloride</name>
        <dbReference type="ChEBI" id="CHEBI:17996"/>
    </ligand>
</feature>
<feature type="binding site" evidence="4 5 10">
    <location>
        <position position="352"/>
    </location>
    <ligand>
        <name>chloride</name>
        <dbReference type="ChEBI" id="CHEBI:17996"/>
    </ligand>
</feature>
<feature type="site" description="Transition state stabilizer" evidence="2">
    <location>
        <position position="315"/>
    </location>
</feature>
<feature type="modified residue" description="Pyrrolidone carboxylic acid" evidence="1">
    <location>
        <position position="16"/>
    </location>
</feature>
<feature type="modified residue" description="Deamidated asparagine; partial" evidence="7">
    <location>
        <position position="365"/>
    </location>
</feature>
<feature type="modified residue" description="Deamidated asparagine; partial; alternate" evidence="7">
    <location>
        <position position="427"/>
    </location>
</feature>
<feature type="modified residue" description="Deamidated asparagine; partial" evidence="7">
    <location>
        <position position="474"/>
    </location>
</feature>
<feature type="glycosylation site" description="N-linked (GlcNAc...) asparagine" evidence="6 7">
    <location>
        <position position="427"/>
    </location>
</feature>
<feature type="glycosylation site" description="N-linked (GlcNAc...) asparagine" evidence="3">
    <location>
        <position position="476"/>
    </location>
</feature>
<feature type="disulfide bond" evidence="4 5 10">
    <location>
        <begin position="43"/>
        <end position="101"/>
    </location>
</feature>
<feature type="disulfide bond" evidence="4 5 10">
    <location>
        <begin position="85"/>
        <end position="130"/>
    </location>
</feature>
<feature type="disulfide bond" evidence="4 5 10">
    <location>
        <begin position="156"/>
        <end position="175"/>
    </location>
</feature>
<feature type="disulfide bond" evidence="4 5 10">
    <location>
        <begin position="393"/>
        <end position="399"/>
    </location>
</feature>
<feature type="disulfide bond" evidence="4 5 10">
    <location>
        <begin position="465"/>
        <end position="477"/>
    </location>
</feature>
<feature type="sequence conflict" description="In Ref. 8; AAA57345." evidence="8" ref="8">
    <original>N</original>
    <variation>T</variation>
    <location>
        <position position="285"/>
    </location>
</feature>
<feature type="strand" evidence="12">
    <location>
        <begin position="27"/>
        <end position="31"/>
    </location>
</feature>
<feature type="helix" evidence="12">
    <location>
        <begin position="36"/>
        <end position="45"/>
    </location>
</feature>
<feature type="turn" evidence="12">
    <location>
        <begin position="46"/>
        <end position="51"/>
    </location>
</feature>
<feature type="strand" evidence="12">
    <location>
        <begin position="54"/>
        <end position="57"/>
    </location>
</feature>
<feature type="turn" evidence="12">
    <location>
        <begin position="67"/>
        <end position="70"/>
    </location>
</feature>
<feature type="helix" evidence="12">
    <location>
        <begin position="73"/>
        <end position="77"/>
    </location>
</feature>
<feature type="strand" evidence="12">
    <location>
        <begin position="78"/>
        <end position="80"/>
    </location>
</feature>
<feature type="helix" evidence="12">
    <location>
        <begin position="91"/>
        <end position="103"/>
    </location>
</feature>
<feature type="strand" evidence="12">
    <location>
        <begin position="107"/>
        <end position="112"/>
    </location>
</feature>
<feature type="strand" evidence="12">
    <location>
        <begin position="115"/>
        <end position="119"/>
    </location>
</feature>
<feature type="strand" evidence="12">
    <location>
        <begin position="124"/>
        <end position="126"/>
    </location>
</feature>
<feature type="turn" evidence="12">
    <location>
        <begin position="136"/>
        <end position="139"/>
    </location>
</feature>
<feature type="turn" evidence="12">
    <location>
        <begin position="142"/>
        <end position="145"/>
    </location>
</feature>
<feature type="helix" evidence="12">
    <location>
        <begin position="148"/>
        <end position="150"/>
    </location>
</feature>
<feature type="turn" evidence="12">
    <location>
        <begin position="153"/>
        <end position="155"/>
    </location>
</feature>
<feature type="strand" evidence="12">
    <location>
        <begin position="158"/>
        <end position="162"/>
    </location>
</feature>
<feature type="helix" evidence="12">
    <location>
        <begin position="169"/>
        <end position="174"/>
    </location>
</feature>
<feature type="helix" evidence="12">
    <location>
        <begin position="177"/>
        <end position="179"/>
    </location>
</feature>
<feature type="strand" evidence="12">
    <location>
        <begin position="180"/>
        <end position="183"/>
    </location>
</feature>
<feature type="helix" evidence="12">
    <location>
        <begin position="188"/>
        <end position="204"/>
    </location>
</feature>
<feature type="strand" evidence="12">
    <location>
        <begin position="208"/>
        <end position="211"/>
    </location>
</feature>
<feature type="helix" evidence="12">
    <location>
        <begin position="214"/>
        <end position="216"/>
    </location>
</feature>
<feature type="helix" evidence="12">
    <location>
        <begin position="219"/>
        <end position="226"/>
    </location>
</feature>
<feature type="turn" evidence="12">
    <location>
        <begin position="234"/>
        <end position="236"/>
    </location>
</feature>
<feature type="strand" evidence="12">
    <location>
        <begin position="244"/>
        <end position="247"/>
    </location>
</feature>
<feature type="strand" evidence="12">
    <location>
        <begin position="253"/>
        <end position="256"/>
    </location>
</feature>
<feature type="helix" evidence="12">
    <location>
        <begin position="259"/>
        <end position="262"/>
    </location>
</feature>
<feature type="turn" evidence="12">
    <location>
        <begin position="263"/>
        <end position="265"/>
    </location>
</feature>
<feature type="strand" evidence="12">
    <location>
        <begin position="266"/>
        <end position="269"/>
    </location>
</feature>
<feature type="helix" evidence="12">
    <location>
        <begin position="272"/>
        <end position="282"/>
    </location>
</feature>
<feature type="helix" evidence="12">
    <location>
        <begin position="289"/>
        <end position="294"/>
    </location>
</feature>
<feature type="helix" evidence="12">
    <location>
        <begin position="297"/>
        <end position="299"/>
    </location>
</feature>
<feature type="turn" evidence="12">
    <location>
        <begin position="304"/>
        <end position="306"/>
    </location>
</feature>
<feature type="strand" evidence="12">
    <location>
        <begin position="307"/>
        <end position="309"/>
    </location>
</feature>
<feature type="helix" evidence="12">
    <location>
        <begin position="316"/>
        <end position="318"/>
    </location>
</feature>
<feature type="strand" evidence="11">
    <location>
        <begin position="321"/>
        <end position="323"/>
    </location>
</feature>
<feature type="helix" evidence="11">
    <location>
        <begin position="324"/>
        <end position="326"/>
    </location>
</feature>
<feature type="helix" evidence="12">
    <location>
        <begin position="330"/>
        <end position="332"/>
    </location>
</feature>
<feature type="helix" evidence="12">
    <location>
        <begin position="333"/>
        <end position="345"/>
    </location>
</feature>
<feature type="strand" evidence="12">
    <location>
        <begin position="348"/>
        <end position="355"/>
    </location>
</feature>
<feature type="strand" evidence="11">
    <location>
        <begin position="363"/>
        <end position="368"/>
    </location>
</feature>
<feature type="turn" evidence="12">
    <location>
        <begin position="369"/>
        <end position="372"/>
    </location>
</feature>
<feature type="strand" evidence="12">
    <location>
        <begin position="375"/>
        <end position="378"/>
    </location>
</feature>
<feature type="helix" evidence="12">
    <location>
        <begin position="400"/>
        <end position="402"/>
    </location>
</feature>
<feature type="helix" evidence="12">
    <location>
        <begin position="404"/>
        <end position="415"/>
    </location>
</feature>
<feature type="turn" evidence="12">
    <location>
        <begin position="416"/>
        <end position="418"/>
    </location>
</feature>
<feature type="strand" evidence="12">
    <location>
        <begin position="421"/>
        <end position="426"/>
    </location>
</feature>
<feature type="strand" evidence="12">
    <location>
        <begin position="428"/>
        <end position="436"/>
    </location>
</feature>
<feature type="turn" evidence="12">
    <location>
        <begin position="437"/>
        <end position="439"/>
    </location>
</feature>
<feature type="strand" evidence="12">
    <location>
        <begin position="440"/>
        <end position="445"/>
    </location>
</feature>
<feature type="strand" evidence="12">
    <location>
        <begin position="447"/>
        <end position="449"/>
    </location>
</feature>
<feature type="strand" evidence="12">
    <location>
        <begin position="451"/>
        <end position="456"/>
    </location>
</feature>
<feature type="strand" evidence="12">
    <location>
        <begin position="461"/>
        <end position="465"/>
    </location>
</feature>
<feature type="turn" evidence="12">
    <location>
        <begin position="467"/>
        <end position="469"/>
    </location>
</feature>
<feature type="strand" evidence="12">
    <location>
        <begin position="476"/>
        <end position="479"/>
    </location>
</feature>
<feature type="strand" evidence="12">
    <location>
        <begin position="481"/>
        <end position="484"/>
    </location>
</feature>
<feature type="strand" evidence="12">
    <location>
        <begin position="488"/>
        <end position="494"/>
    </location>
</feature>
<feature type="strand" evidence="11">
    <location>
        <begin position="498"/>
        <end position="500"/>
    </location>
</feature>
<feature type="strand" evidence="12">
    <location>
        <begin position="502"/>
        <end position="506"/>
    </location>
</feature>
<feature type="helix" evidence="12">
    <location>
        <begin position="507"/>
        <end position="509"/>
    </location>
</feature>
<gene>
    <name evidence="9" type="primary">AMY1A</name>
    <name type="synonym">AMY1</name>
</gene>
<sequence>MKLFWLLFTIGFCWAQYSSNTQQGRTSIVHLFEWRWVDIALECERYLAPKGFGGVQVSPPNENVAIHNPFRPWWERYQPVSYKLCTRSGNEDEFRNMVTRCNNVGVRIYVDAVINHMCGNAVSAGTSSTCGSYFNPGSRDFPAVPYSGWDFNDGKCKTGSGDIENYNDATQVRDCRLSGLLDLALGKDYVRSKIAEYMNHLIDIGVAGFRIDASKHMWPGDIKAILDKLHNLNSNWFPEGSKPFIYQEVIDLGGEPIKSSDYFGNGRVTEFKYGAKLGTVIRKWNGEKMSYLKNWGEGWGFMPSDRALVFVDNHDNQRGHGAGGASILTFWDARLYKMAVGFMLAHPYGFTRVMSSYRWPRYFENGKDVNDWVGPPNDNGVTKEVTINPDTTCGNDWVCEHRWRQIRNMVNFRNVVDGQPFTNWYDNGSNQVAFGRGNRGFIVFNNDDWTFSLTLQTGLPAGTYCDVISGDKINGNCTGIKIYVSDDGKAHFSISNSAEDPFIAIHAESKL</sequence>
<accession>P0DUB6</accession>
<accession>A6NJS5</accession>
<accession>A8K8H6</accession>
<accession>P04745</accession>
<accession>Q13763</accession>
<accession>Q5T083</accession>
<protein>
    <recommendedName>
        <fullName>Alpha-amylase 1A</fullName>
        <ecNumber evidence="4">3.2.1.1</ecNumber>
    </recommendedName>
    <alternativeName>
        <fullName>1,4-alpha-D-glucan glucanohydrolase 1</fullName>
    </alternativeName>
    <alternativeName>
        <fullName>Salivary alpha-amylase</fullName>
    </alternativeName>
</protein>
<evidence type="ECO:0000250" key="1">
    <source>
        <dbReference type="UniProtKB" id="P00687"/>
    </source>
</evidence>
<evidence type="ECO:0000250" key="2">
    <source>
        <dbReference type="UniProtKB" id="P04746"/>
    </source>
</evidence>
<evidence type="ECO:0000255" key="3"/>
<evidence type="ECO:0000269" key="4">
    <source>
    </source>
</evidence>
<evidence type="ECO:0000269" key="5">
    <source>
    </source>
</evidence>
<evidence type="ECO:0000269" key="6">
    <source>
    </source>
</evidence>
<evidence type="ECO:0000269" key="7">
    <source>
    </source>
</evidence>
<evidence type="ECO:0000305" key="8"/>
<evidence type="ECO:0000312" key="9">
    <source>
        <dbReference type="HGNC" id="HGNC:474"/>
    </source>
</evidence>
<evidence type="ECO:0007744" key="10">
    <source>
        <dbReference type="PDB" id="1SMD"/>
    </source>
</evidence>
<evidence type="ECO:0007829" key="11">
    <source>
        <dbReference type="PDB" id="1SMD"/>
    </source>
</evidence>
<evidence type="ECO:0007829" key="12">
    <source>
        <dbReference type="PDB" id="3DHP"/>
    </source>
</evidence>
<proteinExistence type="evidence at protein level"/>